<reference key="1">
    <citation type="submission" date="1991-03" db="EMBL/GenBank/DDBJ databases">
        <authorList>
            <person name="Kavanagh T.A."/>
            <person name="Bevan M.W."/>
        </authorList>
    </citation>
    <scope>NUCLEOTIDE SEQUENCE [GENOMIC DNA]</scope>
    <source>
        <strain>cv. Havana</strain>
    </source>
</reference>
<proteinExistence type="inferred from homology"/>
<comment type="function">
    <text>The light-harvesting complex (LHC) functions as a light receptor, it captures and delivers excitation energy to photosystems with which it is closely associated.</text>
</comment>
<comment type="cofactor">
    <text evidence="1">Binds at least 14 chlorophylls (8 Chl-a and 6 Chl-b) and carotenoids such as lutein and neoxanthin.</text>
</comment>
<comment type="subunit">
    <text>The LHC complex consists of chlorophyll a-b binding proteins.</text>
</comment>
<comment type="subcellular location">
    <subcellularLocation>
        <location>Plastid</location>
        <location>Chloroplast thylakoid membrane</location>
        <topology>Multi-pass membrane protein</topology>
    </subcellularLocation>
</comment>
<comment type="domain">
    <text>The N-terminus of the protein extends into the stroma where it is involved with adhesion of granal membranes and post-translational modifications; both are believed to mediate the distribution of excitation energy between photosystems I and II.</text>
</comment>
<comment type="PTM">
    <text evidence="1">Photoregulated by reversible phosphorylation of its threonine residues.</text>
</comment>
<comment type="miscellaneous">
    <text>There are at least 16 genes for the major CAB protein which can be classified into at least 5 small multigene families.</text>
</comment>
<comment type="similarity">
    <text evidence="5">Belongs to the light-harvesting chlorophyll a/b-binding (LHC) protein family.</text>
</comment>
<evidence type="ECO:0000250" key="1"/>
<evidence type="ECO:0000250" key="2">
    <source>
        <dbReference type="UniProtKB" id="P07371"/>
    </source>
</evidence>
<evidence type="ECO:0000250" key="3">
    <source>
        <dbReference type="UniProtKB" id="P12333"/>
    </source>
</evidence>
<evidence type="ECO:0000255" key="4"/>
<evidence type="ECO:0000305" key="5"/>
<keyword id="KW-0007">Acetylation</keyword>
<keyword id="KW-0148">Chlorophyll</keyword>
<keyword id="KW-0150">Chloroplast</keyword>
<keyword id="KW-0157">Chromophore</keyword>
<keyword id="KW-0460">Magnesium</keyword>
<keyword id="KW-0472">Membrane</keyword>
<keyword id="KW-0479">Metal-binding</keyword>
<keyword id="KW-0597">Phosphoprotein</keyword>
<keyword id="KW-0602">Photosynthesis</keyword>
<keyword id="KW-0603">Photosystem I</keyword>
<keyword id="KW-0604">Photosystem II</keyword>
<keyword id="KW-0934">Plastid</keyword>
<keyword id="KW-1185">Reference proteome</keyword>
<keyword id="KW-0793">Thylakoid</keyword>
<keyword id="KW-0809">Transit peptide</keyword>
<keyword id="KW-0812">Transmembrane</keyword>
<keyword id="KW-1133">Transmembrane helix</keyword>
<gene>
    <name type="primary">CAB7</name>
</gene>
<feature type="transit peptide" description="Chloroplast" evidence="1">
    <location>
        <begin position="1"/>
        <end position="35"/>
    </location>
</feature>
<feature type="chain" id="PRO_0000003701" description="Chlorophyll a-b binding protein 7, chloroplastic">
    <location>
        <begin position="36"/>
        <end position="267"/>
    </location>
</feature>
<feature type="transmembrane region" description="Helical" evidence="4">
    <location>
        <begin position="101"/>
        <end position="121"/>
    </location>
</feature>
<feature type="transmembrane region" description="Helical" evidence="4">
    <location>
        <begin position="153"/>
        <end position="173"/>
    </location>
</feature>
<feature type="transmembrane region" description="Helical" evidence="4">
    <location>
        <begin position="221"/>
        <end position="241"/>
    </location>
</feature>
<feature type="binding site" description="axial binding residue" evidence="3">
    <location>
        <position position="59"/>
    </location>
    <ligand>
        <name>chlorophyll b</name>
        <dbReference type="ChEBI" id="CHEBI:61721"/>
        <label>1</label>
    </ligand>
    <ligandPart>
        <name>Mg</name>
        <dbReference type="ChEBI" id="CHEBI:25107"/>
    </ligandPart>
</feature>
<feature type="binding site" evidence="1">
    <location>
        <position position="81"/>
    </location>
    <ligand>
        <name>chlorophyll a</name>
        <dbReference type="ChEBI" id="CHEBI:58416"/>
        <label>1</label>
    </ligand>
</feature>
<feature type="binding site" evidence="1">
    <location>
        <position position="87"/>
    </location>
    <ligand>
        <name>chlorophyll a</name>
        <dbReference type="ChEBI" id="CHEBI:58416"/>
        <label>1</label>
    </ligand>
</feature>
<feature type="binding site" description="axial binding residue" evidence="3">
    <location>
        <position position="100"/>
    </location>
    <ligand>
        <name>chlorophyll a</name>
        <dbReference type="ChEBI" id="CHEBI:58416"/>
        <label>1</label>
    </ligand>
    <ligandPart>
        <name>Mg</name>
        <dbReference type="ChEBI" id="CHEBI:25107"/>
    </ligandPart>
</feature>
<feature type="binding site" description="axial binding residue" evidence="3">
    <location>
        <position position="103"/>
    </location>
    <ligand>
        <name>chlorophyll a</name>
        <dbReference type="ChEBI" id="CHEBI:58416"/>
        <label>2</label>
    </ligand>
    <ligandPart>
        <name>Mg</name>
        <dbReference type="ChEBI" id="CHEBI:25107"/>
    </ligandPart>
</feature>
<feature type="binding site" evidence="1">
    <location>
        <position position="105"/>
    </location>
    <ligand>
        <name>chlorophyll b</name>
        <dbReference type="ChEBI" id="CHEBI:61721"/>
        <label>2</label>
    </ligand>
</feature>
<feature type="binding site" evidence="1">
    <location>
        <position position="138"/>
    </location>
    <ligand>
        <name>chlorophyll a</name>
        <dbReference type="ChEBI" id="CHEBI:58416"/>
        <label>3</label>
    </ligand>
</feature>
<feature type="binding site" evidence="1">
    <location>
        <position position="148"/>
    </location>
    <ligand>
        <name>chlorophyll a</name>
        <dbReference type="ChEBI" id="CHEBI:58416"/>
        <label>3</label>
    </ligand>
</feature>
<feature type="binding site" description="axial binding residue" evidence="3">
    <location>
        <position position="154"/>
    </location>
    <ligand>
        <name>chlorophyll b</name>
        <dbReference type="ChEBI" id="CHEBI:61721"/>
        <label>2</label>
    </ligand>
    <ligandPart>
        <name>Mg</name>
        <dbReference type="ChEBI" id="CHEBI:25107"/>
    </ligandPart>
</feature>
<feature type="binding site" evidence="1">
    <location>
        <position position="158"/>
    </location>
    <ligand>
        <name>chlorophyll b</name>
        <dbReference type="ChEBI" id="CHEBI:61721"/>
        <label>3</label>
    </ligand>
</feature>
<feature type="binding site" evidence="1">
    <location>
        <position position="166"/>
    </location>
    <ligand>
        <name>chlorophyll b</name>
        <dbReference type="ChEBI" id="CHEBI:61721"/>
        <label>4</label>
    </ligand>
</feature>
<feature type="binding site" evidence="2">
    <location>
        <position position="166"/>
    </location>
    <ligand>
        <name>chlorophyll b</name>
        <dbReference type="ChEBI" id="CHEBI:61721"/>
        <label>5</label>
    </ligand>
</feature>
<feature type="binding site" description="axial binding residue" evidence="3">
    <location>
        <position position="174"/>
    </location>
    <ligand>
        <name>chlorophyll b</name>
        <dbReference type="ChEBI" id="CHEBI:61721"/>
        <label>3</label>
    </ligand>
    <ligandPart>
        <name>Mg</name>
        <dbReference type="ChEBI" id="CHEBI:25107"/>
    </ligandPart>
</feature>
<feature type="binding site" evidence="1">
    <location>
        <position position="177"/>
    </location>
    <ligand>
        <name>chlorophyll b</name>
        <dbReference type="ChEBI" id="CHEBI:61721"/>
        <label>4</label>
    </ligand>
</feature>
<feature type="binding site" evidence="1">
    <location>
        <position position="183"/>
    </location>
    <ligand>
        <name>chlorophyll b</name>
        <dbReference type="ChEBI" id="CHEBI:61721"/>
        <label>2</label>
    </ligand>
</feature>
<feature type="binding site" evidence="1">
    <location>
        <position position="214"/>
    </location>
    <ligand>
        <name>chlorophyll a</name>
        <dbReference type="ChEBI" id="CHEBI:58416"/>
        <label>5</label>
    </ligand>
</feature>
<feature type="binding site" description="axial binding residue" evidence="3">
    <location>
        <position position="215"/>
    </location>
    <ligand>
        <name>chlorophyll a</name>
        <dbReference type="ChEBI" id="CHEBI:58416"/>
        <label>3</label>
    </ligand>
    <ligandPart>
        <name>Mg</name>
        <dbReference type="ChEBI" id="CHEBI:25107"/>
    </ligandPart>
</feature>
<feature type="binding site" description="axial binding residue" evidence="3">
    <location>
        <position position="218"/>
    </location>
    <ligand>
        <name>chlorophyll a</name>
        <dbReference type="ChEBI" id="CHEBI:58416"/>
        <label>4</label>
    </ligand>
    <ligandPart>
        <name>Mg</name>
        <dbReference type="ChEBI" id="CHEBI:25107"/>
    </ligandPart>
</feature>
<feature type="binding site" evidence="1">
    <location>
        <position position="220"/>
    </location>
    <ligand>
        <name>chlorophyll a</name>
        <dbReference type="ChEBI" id="CHEBI:58416"/>
        <label>1</label>
    </ligand>
</feature>
<feature type="binding site" description="axial binding residue" evidence="3">
    <location>
        <position position="232"/>
    </location>
    <ligand>
        <name>chlorophyll a</name>
        <dbReference type="ChEBI" id="CHEBI:58416"/>
        <label>5</label>
    </ligand>
    <ligandPart>
        <name>Mg</name>
        <dbReference type="ChEBI" id="CHEBI:25107"/>
    </ligandPart>
</feature>
<feature type="binding site" description="axial binding residue" evidence="3">
    <location>
        <position position="247"/>
    </location>
    <ligand>
        <name>chlorophyll a</name>
        <dbReference type="ChEBI" id="CHEBI:58416"/>
        <label>6</label>
    </ligand>
    <ligandPart>
        <name>Mg</name>
        <dbReference type="ChEBI" id="CHEBI:25107"/>
    </ligandPart>
</feature>
<feature type="binding site" evidence="1">
    <location>
        <position position="256"/>
    </location>
    <ligand>
        <name>chlorophyll a</name>
        <dbReference type="ChEBI" id="CHEBI:58416"/>
        <label>6</label>
    </ligand>
</feature>
<feature type="binding site" evidence="1">
    <location>
        <position position="263"/>
    </location>
    <ligand>
        <name>chlorophyll b</name>
        <dbReference type="ChEBI" id="CHEBI:61721"/>
        <label>5</label>
    </ligand>
</feature>
<feature type="modified residue" description="N2-acetylarginine" evidence="1">
    <location>
        <position position="36"/>
    </location>
</feature>
<feature type="modified residue" description="Phosphothreonine" evidence="1">
    <location>
        <position position="38"/>
    </location>
</feature>
<organism>
    <name type="scientific">Nicotiana tabacum</name>
    <name type="common">Common tobacco</name>
    <dbReference type="NCBI Taxonomy" id="4097"/>
    <lineage>
        <taxon>Eukaryota</taxon>
        <taxon>Viridiplantae</taxon>
        <taxon>Streptophyta</taxon>
        <taxon>Embryophyta</taxon>
        <taxon>Tracheophyta</taxon>
        <taxon>Spermatophyta</taxon>
        <taxon>Magnoliopsida</taxon>
        <taxon>eudicotyledons</taxon>
        <taxon>Gunneridae</taxon>
        <taxon>Pentapetalae</taxon>
        <taxon>asterids</taxon>
        <taxon>lamiids</taxon>
        <taxon>Solanales</taxon>
        <taxon>Solanaceae</taxon>
        <taxon>Nicotianoideae</taxon>
        <taxon>Nicotianeae</taxon>
        <taxon>Nicotiana</taxon>
    </lineage>
</organism>
<accession>P27491</accession>
<sequence length="267" mass="28335">MTASTMALSSPSFAGNAVKLSPSSSEITGNGKAIMRKTVTKAKPVSSGSPWYGPDRVKYLGPFSGEAPSYLTGEFPGDYGWDTAGLSADPETFAKNRELEVIHCRWAMLGALGCVFPELLARNGVKFGEAVWFKAGSQIFSEGGLDYLGNPSLVHAQSILAIWACQVVLMGAIEGYRVAGGPLGEVTDPLYPGGSFDPLGLADDPEAFAELKVKEIKNGRLAMFSMFGFFVQAIVTGKGPLDNLVDHLADPVNNNAWAYATNFVPGK</sequence>
<dbReference type="EMBL" id="X58229">
    <property type="protein sequence ID" value="CAA41187.1"/>
    <property type="molecule type" value="Genomic_DNA"/>
</dbReference>
<dbReference type="PIR" id="S14650">
    <property type="entry name" value="S14650"/>
</dbReference>
<dbReference type="SMR" id="P27491"/>
<dbReference type="STRING" id="4097.P27491"/>
<dbReference type="PaxDb" id="4097-P27491"/>
<dbReference type="GeneID" id="107807254"/>
<dbReference type="KEGG" id="nta:107791896"/>
<dbReference type="KEGG" id="nta:107807254"/>
<dbReference type="OMA" id="HNNAWAY"/>
<dbReference type="OrthoDB" id="1858299at2759"/>
<dbReference type="Proteomes" id="UP000084051">
    <property type="component" value="Unplaced"/>
</dbReference>
<dbReference type="GO" id="GO:0009535">
    <property type="term" value="C:chloroplast thylakoid membrane"/>
    <property type="evidence" value="ECO:0000318"/>
    <property type="project" value="GO_Central"/>
</dbReference>
<dbReference type="GO" id="GO:0009522">
    <property type="term" value="C:photosystem I"/>
    <property type="evidence" value="ECO:0007669"/>
    <property type="project" value="UniProtKB-KW"/>
</dbReference>
<dbReference type="GO" id="GO:0009523">
    <property type="term" value="C:photosystem II"/>
    <property type="evidence" value="ECO:0007669"/>
    <property type="project" value="UniProtKB-KW"/>
</dbReference>
<dbReference type="GO" id="GO:0016168">
    <property type="term" value="F:chlorophyll binding"/>
    <property type="evidence" value="ECO:0007669"/>
    <property type="project" value="UniProtKB-KW"/>
</dbReference>
<dbReference type="GO" id="GO:0046872">
    <property type="term" value="F:metal ion binding"/>
    <property type="evidence" value="ECO:0007669"/>
    <property type="project" value="UniProtKB-KW"/>
</dbReference>
<dbReference type="GO" id="GO:0009768">
    <property type="term" value="P:photosynthesis, light harvesting in photosystem I"/>
    <property type="evidence" value="ECO:0000318"/>
    <property type="project" value="GO_Central"/>
</dbReference>
<dbReference type="GO" id="GO:0009416">
    <property type="term" value="P:response to light stimulus"/>
    <property type="evidence" value="ECO:0000318"/>
    <property type="project" value="GO_Central"/>
</dbReference>
<dbReference type="FunFam" id="1.10.3460.10:FF:000001">
    <property type="entry name" value="Chlorophyll a-b binding protein, chloroplastic"/>
    <property type="match status" value="1"/>
</dbReference>
<dbReference type="Gene3D" id="1.10.3460.10">
    <property type="entry name" value="Chlorophyll a/b binding protein domain"/>
    <property type="match status" value="1"/>
</dbReference>
<dbReference type="InterPro" id="IPR001344">
    <property type="entry name" value="Chloro_AB-bd_pln"/>
</dbReference>
<dbReference type="InterPro" id="IPR022796">
    <property type="entry name" value="Chloroa_b-bind"/>
</dbReference>
<dbReference type="PANTHER" id="PTHR21649">
    <property type="entry name" value="CHLOROPHYLL A/B BINDING PROTEIN"/>
    <property type="match status" value="1"/>
</dbReference>
<dbReference type="Pfam" id="PF00504">
    <property type="entry name" value="Chloroa_b-bind"/>
    <property type="match status" value="1"/>
</dbReference>
<dbReference type="SUPFAM" id="SSF103511">
    <property type="entry name" value="Chlorophyll a-b binding protein"/>
    <property type="match status" value="1"/>
</dbReference>
<name>CB27_TOBAC</name>
<protein>
    <recommendedName>
        <fullName>Chlorophyll a-b binding protein 7, chloroplastic</fullName>
    </recommendedName>
    <alternativeName>
        <fullName>LHCII type I CAB-7</fullName>
        <shortName>LHCP</shortName>
    </alternativeName>
</protein>